<organism>
    <name type="scientific">Streptococcus pyogenes serotype M12 (strain MGAS2096)</name>
    <dbReference type="NCBI Taxonomy" id="370553"/>
    <lineage>
        <taxon>Bacteria</taxon>
        <taxon>Bacillati</taxon>
        <taxon>Bacillota</taxon>
        <taxon>Bacilli</taxon>
        <taxon>Lactobacillales</taxon>
        <taxon>Streptococcaceae</taxon>
        <taxon>Streptococcus</taxon>
    </lineage>
</organism>
<dbReference type="EC" id="2.3.1.180" evidence="1"/>
<dbReference type="EMBL" id="CP000261">
    <property type="protein sequence ID" value="ABF36574.1"/>
    <property type="molecule type" value="Genomic_DNA"/>
</dbReference>
<dbReference type="SMR" id="Q1JA87"/>
<dbReference type="KEGG" id="spj:MGAS2096_Spy1522"/>
<dbReference type="HOGENOM" id="CLU_039592_4_1_9"/>
<dbReference type="UniPathway" id="UPA00094"/>
<dbReference type="GO" id="GO:0005737">
    <property type="term" value="C:cytoplasm"/>
    <property type="evidence" value="ECO:0007669"/>
    <property type="project" value="UniProtKB-SubCell"/>
</dbReference>
<dbReference type="GO" id="GO:0004315">
    <property type="term" value="F:3-oxoacyl-[acyl-carrier-protein] synthase activity"/>
    <property type="evidence" value="ECO:0007669"/>
    <property type="project" value="InterPro"/>
</dbReference>
<dbReference type="GO" id="GO:0033818">
    <property type="term" value="F:beta-ketoacyl-acyl-carrier-protein synthase III activity"/>
    <property type="evidence" value="ECO:0007669"/>
    <property type="project" value="UniProtKB-UniRule"/>
</dbReference>
<dbReference type="GO" id="GO:0006633">
    <property type="term" value="P:fatty acid biosynthetic process"/>
    <property type="evidence" value="ECO:0007669"/>
    <property type="project" value="UniProtKB-UniRule"/>
</dbReference>
<dbReference type="CDD" id="cd00830">
    <property type="entry name" value="KAS_III"/>
    <property type="match status" value="1"/>
</dbReference>
<dbReference type="Gene3D" id="3.40.47.10">
    <property type="match status" value="1"/>
</dbReference>
<dbReference type="HAMAP" id="MF_01815">
    <property type="entry name" value="FabH"/>
    <property type="match status" value="1"/>
</dbReference>
<dbReference type="InterPro" id="IPR013747">
    <property type="entry name" value="ACP_syn_III_C"/>
</dbReference>
<dbReference type="InterPro" id="IPR013751">
    <property type="entry name" value="ACP_syn_III_N"/>
</dbReference>
<dbReference type="InterPro" id="IPR004655">
    <property type="entry name" value="FabH"/>
</dbReference>
<dbReference type="InterPro" id="IPR016039">
    <property type="entry name" value="Thiolase-like"/>
</dbReference>
<dbReference type="NCBIfam" id="TIGR00747">
    <property type="entry name" value="fabH"/>
    <property type="match status" value="1"/>
</dbReference>
<dbReference type="NCBIfam" id="NF006829">
    <property type="entry name" value="PRK09352.1"/>
    <property type="match status" value="1"/>
</dbReference>
<dbReference type="PANTHER" id="PTHR43091">
    <property type="entry name" value="3-OXOACYL-[ACYL-CARRIER-PROTEIN] SYNTHASE"/>
    <property type="match status" value="1"/>
</dbReference>
<dbReference type="PANTHER" id="PTHR43091:SF1">
    <property type="entry name" value="BETA-KETOACYL-[ACYL-CARRIER-PROTEIN] SYNTHASE III, CHLOROPLASTIC"/>
    <property type="match status" value="1"/>
</dbReference>
<dbReference type="Pfam" id="PF08545">
    <property type="entry name" value="ACP_syn_III"/>
    <property type="match status" value="1"/>
</dbReference>
<dbReference type="Pfam" id="PF08541">
    <property type="entry name" value="ACP_syn_III_C"/>
    <property type="match status" value="1"/>
</dbReference>
<dbReference type="SUPFAM" id="SSF53901">
    <property type="entry name" value="Thiolase-like"/>
    <property type="match status" value="1"/>
</dbReference>
<reference key="1">
    <citation type="journal article" date="2006" name="Proc. Natl. Acad. Sci. U.S.A.">
        <title>Molecular genetic anatomy of inter- and intraserotype variation in the human bacterial pathogen group A Streptococcus.</title>
        <authorList>
            <person name="Beres S.B."/>
            <person name="Richter E.W."/>
            <person name="Nagiec M.J."/>
            <person name="Sumby P."/>
            <person name="Porcella S.F."/>
            <person name="DeLeo F.R."/>
            <person name="Musser J.M."/>
        </authorList>
    </citation>
    <scope>NUCLEOTIDE SEQUENCE [LARGE SCALE GENOMIC DNA]</scope>
    <source>
        <strain>MGAS2096</strain>
    </source>
</reference>
<keyword id="KW-0012">Acyltransferase</keyword>
<keyword id="KW-0963">Cytoplasm</keyword>
<keyword id="KW-0275">Fatty acid biosynthesis</keyword>
<keyword id="KW-0276">Fatty acid metabolism</keyword>
<keyword id="KW-0444">Lipid biosynthesis</keyword>
<keyword id="KW-0443">Lipid metabolism</keyword>
<keyword id="KW-0511">Multifunctional enzyme</keyword>
<keyword id="KW-0808">Transferase</keyword>
<comment type="function">
    <text evidence="1">Catalyzes the condensation reaction of fatty acid synthesis by the addition to an acyl acceptor of two carbons from malonyl-ACP. Catalyzes the first condensation reaction which initiates fatty acid synthesis and may therefore play a role in governing the total rate of fatty acid production. Possesses both acetoacetyl-ACP synthase and acetyl transacylase activities. Its substrate specificity determines the biosynthesis of branched-chain and/or straight-chain of fatty acids.</text>
</comment>
<comment type="catalytic activity">
    <reaction evidence="1">
        <text>malonyl-[ACP] + acetyl-CoA + H(+) = 3-oxobutanoyl-[ACP] + CO2 + CoA</text>
        <dbReference type="Rhea" id="RHEA:12080"/>
        <dbReference type="Rhea" id="RHEA-COMP:9623"/>
        <dbReference type="Rhea" id="RHEA-COMP:9625"/>
        <dbReference type="ChEBI" id="CHEBI:15378"/>
        <dbReference type="ChEBI" id="CHEBI:16526"/>
        <dbReference type="ChEBI" id="CHEBI:57287"/>
        <dbReference type="ChEBI" id="CHEBI:57288"/>
        <dbReference type="ChEBI" id="CHEBI:78449"/>
        <dbReference type="ChEBI" id="CHEBI:78450"/>
        <dbReference type="EC" id="2.3.1.180"/>
    </reaction>
</comment>
<comment type="pathway">
    <text evidence="1">Lipid metabolism; fatty acid biosynthesis.</text>
</comment>
<comment type="subunit">
    <text evidence="1">Homodimer.</text>
</comment>
<comment type="subcellular location">
    <subcellularLocation>
        <location evidence="1">Cytoplasm</location>
    </subcellularLocation>
</comment>
<comment type="domain">
    <text evidence="1">The last Arg residue of the ACP-binding site is essential for the weak association between ACP/AcpP and FabH.</text>
</comment>
<comment type="similarity">
    <text evidence="1">Belongs to the thiolase-like superfamily. FabH family.</text>
</comment>
<protein>
    <recommendedName>
        <fullName evidence="1">Beta-ketoacyl-[acyl-carrier-protein] synthase III</fullName>
        <shortName evidence="1">Beta-ketoacyl-ACP synthase III</shortName>
        <shortName evidence="1">KAS III</shortName>
        <ecNumber evidence="1">2.3.1.180</ecNumber>
    </recommendedName>
    <alternativeName>
        <fullName evidence="1">3-oxoacyl-[acyl-carrier-protein] synthase 3</fullName>
    </alternativeName>
    <alternativeName>
        <fullName evidence="1">3-oxoacyl-[acyl-carrier-protein] synthase III</fullName>
    </alternativeName>
</protein>
<evidence type="ECO:0000255" key="1">
    <source>
        <dbReference type="HAMAP-Rule" id="MF_01815"/>
    </source>
</evidence>
<proteinExistence type="inferred from homology"/>
<gene>
    <name evidence="1" type="primary">fabH</name>
    <name type="ordered locus">MGAS2096_Spy1522</name>
</gene>
<accession>Q1JA87</accession>
<name>FABH_STRPB</name>
<feature type="chain" id="PRO_1000056420" description="Beta-ketoacyl-[acyl-carrier-protein] synthase III">
    <location>
        <begin position="1"/>
        <end position="324"/>
    </location>
</feature>
<feature type="region of interest" description="ACP-binding" evidence="1">
    <location>
        <begin position="250"/>
        <end position="254"/>
    </location>
</feature>
<feature type="active site" evidence="1">
    <location>
        <position position="112"/>
    </location>
</feature>
<feature type="active site" evidence="1">
    <location>
        <position position="249"/>
    </location>
</feature>
<feature type="active site" evidence="1">
    <location>
        <position position="279"/>
    </location>
</feature>
<sequence>MIFSKISQVAHYVPQQLVTNNDLASIMDTSHEWIFSRTGIAERHISRDEMTSDLAIQVADQLLTQSGLKADAIDFIIVATISPDATMPSTAAKVQAAIAATSAFAFDMTAACSGFVFALAMADKLIASGAYQNGMVIGAETLSKLVNWQDRATAVLFGDGAGGVLLEASKDKHVLAETLHTDGARCQSLISGETSLSSPYSIGKKAIATIQMDGRAIFDFAIRDVSKSILTLMAQSDITKDDIDYCLLHQANRRILDKIARKIDVPREKFLENMMRYGNTSAASIPILLSEAVQKGQIRLDGTQKILLSGFGGGLTWGSLIVKI</sequence>